<comment type="function">
    <text evidence="1">Acts as a radical domain for damaged PFL and possibly other radical proteins.</text>
</comment>
<protein>
    <recommendedName>
        <fullName evidence="1">Autonomous glycyl radical cofactor</fullName>
    </recommendedName>
</protein>
<evidence type="ECO:0000255" key="1">
    <source>
        <dbReference type="HAMAP-Rule" id="MF_00806"/>
    </source>
</evidence>
<sequence length="127" mass="14344">MITGIQITKAANDDLLNSFWLLDSEKGEARCIVAKSGFAEDEVVAVSKLGEIEYREIPMEVKPEVRVEGGQHLNVNVLRRETLEDAVKHPEKYPQLTIRVSGYAVRFNSLTPEQQRDVIARTFTESL</sequence>
<proteinExistence type="inferred from homology"/>
<keyword id="KW-0556">Organic radical</keyword>
<name>GRCA_SALPA</name>
<accession>Q5PLH7</accession>
<dbReference type="EMBL" id="CP000026">
    <property type="protein sequence ID" value="AAV76294.1"/>
    <property type="molecule type" value="Genomic_DNA"/>
</dbReference>
<dbReference type="RefSeq" id="WP_000627811.1">
    <property type="nucleotide sequence ID" value="NC_006511.1"/>
</dbReference>
<dbReference type="SMR" id="Q5PLH7"/>
<dbReference type="GeneID" id="66757020"/>
<dbReference type="KEGG" id="spt:SPA0272"/>
<dbReference type="HOGENOM" id="CLU_133780_0_0_6"/>
<dbReference type="Proteomes" id="UP000008185">
    <property type="component" value="Chromosome"/>
</dbReference>
<dbReference type="GO" id="GO:0005829">
    <property type="term" value="C:cytosol"/>
    <property type="evidence" value="ECO:0007669"/>
    <property type="project" value="TreeGrafter"/>
</dbReference>
<dbReference type="GO" id="GO:0008861">
    <property type="term" value="F:formate C-acetyltransferase activity"/>
    <property type="evidence" value="ECO:0007669"/>
    <property type="project" value="TreeGrafter"/>
</dbReference>
<dbReference type="FunFam" id="3.20.70.20:FF:000002">
    <property type="entry name" value="Autonomous glycyl radical cofactor"/>
    <property type="match status" value="1"/>
</dbReference>
<dbReference type="Gene3D" id="3.20.70.20">
    <property type="match status" value="1"/>
</dbReference>
<dbReference type="HAMAP" id="MF_00806">
    <property type="entry name" value="GrcA"/>
    <property type="match status" value="1"/>
</dbReference>
<dbReference type="InterPro" id="IPR050244">
    <property type="entry name" value="Auton_GlycylRad_Cofactor"/>
</dbReference>
<dbReference type="InterPro" id="IPR019777">
    <property type="entry name" value="Form_AcTrfase_GR_CS"/>
</dbReference>
<dbReference type="InterPro" id="IPR001150">
    <property type="entry name" value="Gly_radical"/>
</dbReference>
<dbReference type="InterPro" id="IPR011140">
    <property type="entry name" value="Glycyl_radical_cofactor_GrcA"/>
</dbReference>
<dbReference type="NCBIfam" id="TIGR04365">
    <property type="entry name" value="spare_glycyl"/>
    <property type="match status" value="1"/>
</dbReference>
<dbReference type="PANTHER" id="PTHR30191">
    <property type="entry name" value="FORMATE ACETYLTRANSFERASE"/>
    <property type="match status" value="1"/>
</dbReference>
<dbReference type="PANTHER" id="PTHR30191:SF0">
    <property type="entry name" value="FORMATE ACETYLTRANSFERASE 1"/>
    <property type="match status" value="1"/>
</dbReference>
<dbReference type="Pfam" id="PF01228">
    <property type="entry name" value="Gly_radical"/>
    <property type="match status" value="1"/>
</dbReference>
<dbReference type="PIRSF" id="PIRSF000378">
    <property type="entry name" value="Gly_radicl_yfiD"/>
    <property type="match status" value="1"/>
</dbReference>
<dbReference type="SUPFAM" id="SSF51998">
    <property type="entry name" value="PFL-like glycyl radical enzymes"/>
    <property type="match status" value="1"/>
</dbReference>
<dbReference type="PROSITE" id="PS00850">
    <property type="entry name" value="GLY_RADICAL_1"/>
    <property type="match status" value="1"/>
</dbReference>
<dbReference type="PROSITE" id="PS51149">
    <property type="entry name" value="GLY_RADICAL_2"/>
    <property type="match status" value="1"/>
</dbReference>
<organism>
    <name type="scientific">Salmonella paratyphi A (strain ATCC 9150 / SARB42)</name>
    <dbReference type="NCBI Taxonomy" id="295319"/>
    <lineage>
        <taxon>Bacteria</taxon>
        <taxon>Pseudomonadati</taxon>
        <taxon>Pseudomonadota</taxon>
        <taxon>Gammaproteobacteria</taxon>
        <taxon>Enterobacterales</taxon>
        <taxon>Enterobacteriaceae</taxon>
        <taxon>Salmonella</taxon>
    </lineage>
</organism>
<feature type="chain" id="PRO_0000166706" description="Autonomous glycyl radical cofactor">
    <location>
        <begin position="1"/>
        <end position="127"/>
    </location>
</feature>
<feature type="domain" description="Glycine radical" evidence="1">
    <location>
        <begin position="5"/>
        <end position="127"/>
    </location>
</feature>
<feature type="modified residue" description="Glycine radical" evidence="1">
    <location>
        <position position="102"/>
    </location>
</feature>
<reference key="1">
    <citation type="journal article" date="2004" name="Nat. Genet.">
        <title>Comparison of genome degradation in Paratyphi A and Typhi, human-restricted serovars of Salmonella enterica that cause typhoid.</title>
        <authorList>
            <person name="McClelland M."/>
            <person name="Sanderson K.E."/>
            <person name="Clifton S.W."/>
            <person name="Latreille P."/>
            <person name="Porwollik S."/>
            <person name="Sabo A."/>
            <person name="Meyer R."/>
            <person name="Bieri T."/>
            <person name="Ozersky P."/>
            <person name="McLellan M."/>
            <person name="Harkins C.R."/>
            <person name="Wang C."/>
            <person name="Nguyen C."/>
            <person name="Berghoff A."/>
            <person name="Elliott G."/>
            <person name="Kohlberg S."/>
            <person name="Strong C."/>
            <person name="Du F."/>
            <person name="Carter J."/>
            <person name="Kremizki C."/>
            <person name="Layman D."/>
            <person name="Leonard S."/>
            <person name="Sun H."/>
            <person name="Fulton L."/>
            <person name="Nash W."/>
            <person name="Miner T."/>
            <person name="Minx P."/>
            <person name="Delehaunty K."/>
            <person name="Fronick C."/>
            <person name="Magrini V."/>
            <person name="Nhan M."/>
            <person name="Warren W."/>
            <person name="Florea L."/>
            <person name="Spieth J."/>
            <person name="Wilson R.K."/>
        </authorList>
    </citation>
    <scope>NUCLEOTIDE SEQUENCE [LARGE SCALE GENOMIC DNA]</scope>
    <source>
        <strain>ATCC 9150 / SARB42</strain>
    </source>
</reference>
<gene>
    <name evidence="1" type="primary">grcA</name>
    <name type="ordered locus">SPA0272</name>
</gene>